<dbReference type="EMBL" id="CP000681">
    <property type="protein sequence ID" value="ABP75365.1"/>
    <property type="molecule type" value="Genomic_DNA"/>
</dbReference>
<dbReference type="SMR" id="A4Y5Y2"/>
<dbReference type="STRING" id="319224.Sputcn32_1640"/>
<dbReference type="KEGG" id="spc:Sputcn32_1640"/>
<dbReference type="eggNOG" id="COG0322">
    <property type="taxonomic scope" value="Bacteria"/>
</dbReference>
<dbReference type="HOGENOM" id="CLU_014841_3_0_6"/>
<dbReference type="GO" id="GO:0005737">
    <property type="term" value="C:cytoplasm"/>
    <property type="evidence" value="ECO:0007669"/>
    <property type="project" value="UniProtKB-SubCell"/>
</dbReference>
<dbReference type="GO" id="GO:0009380">
    <property type="term" value="C:excinuclease repair complex"/>
    <property type="evidence" value="ECO:0007669"/>
    <property type="project" value="InterPro"/>
</dbReference>
<dbReference type="GO" id="GO:0003677">
    <property type="term" value="F:DNA binding"/>
    <property type="evidence" value="ECO:0007669"/>
    <property type="project" value="UniProtKB-UniRule"/>
</dbReference>
<dbReference type="GO" id="GO:0009381">
    <property type="term" value="F:excinuclease ABC activity"/>
    <property type="evidence" value="ECO:0007669"/>
    <property type="project" value="UniProtKB-UniRule"/>
</dbReference>
<dbReference type="GO" id="GO:0006289">
    <property type="term" value="P:nucleotide-excision repair"/>
    <property type="evidence" value="ECO:0007669"/>
    <property type="project" value="UniProtKB-UniRule"/>
</dbReference>
<dbReference type="GO" id="GO:0009432">
    <property type="term" value="P:SOS response"/>
    <property type="evidence" value="ECO:0007669"/>
    <property type="project" value="UniProtKB-UniRule"/>
</dbReference>
<dbReference type="CDD" id="cd10434">
    <property type="entry name" value="GIY-YIG_UvrC_Cho"/>
    <property type="match status" value="1"/>
</dbReference>
<dbReference type="FunFam" id="1.10.150.20:FF:000005">
    <property type="entry name" value="UvrABC system protein C"/>
    <property type="match status" value="1"/>
</dbReference>
<dbReference type="FunFam" id="3.30.420.340:FF:000001">
    <property type="entry name" value="UvrABC system protein C"/>
    <property type="match status" value="1"/>
</dbReference>
<dbReference type="FunFam" id="3.40.1440.10:FF:000001">
    <property type="entry name" value="UvrABC system protein C"/>
    <property type="match status" value="1"/>
</dbReference>
<dbReference type="Gene3D" id="1.10.150.20">
    <property type="entry name" value="5' to 3' exonuclease, C-terminal subdomain"/>
    <property type="match status" value="1"/>
</dbReference>
<dbReference type="Gene3D" id="3.40.1440.10">
    <property type="entry name" value="GIY-YIG endonuclease"/>
    <property type="match status" value="1"/>
</dbReference>
<dbReference type="Gene3D" id="4.10.860.10">
    <property type="entry name" value="UVR domain"/>
    <property type="match status" value="1"/>
</dbReference>
<dbReference type="Gene3D" id="3.30.420.340">
    <property type="entry name" value="UvrC, RNAse H endonuclease domain"/>
    <property type="match status" value="1"/>
</dbReference>
<dbReference type="HAMAP" id="MF_00203">
    <property type="entry name" value="UvrC"/>
    <property type="match status" value="1"/>
</dbReference>
<dbReference type="InterPro" id="IPR000305">
    <property type="entry name" value="GIY-YIG_endonuc"/>
</dbReference>
<dbReference type="InterPro" id="IPR035901">
    <property type="entry name" value="GIY-YIG_endonuc_sf"/>
</dbReference>
<dbReference type="InterPro" id="IPR047296">
    <property type="entry name" value="GIY-YIG_UvrC_Cho"/>
</dbReference>
<dbReference type="InterPro" id="IPR003583">
    <property type="entry name" value="Hlx-hairpin-Hlx_DNA-bd_motif"/>
</dbReference>
<dbReference type="InterPro" id="IPR010994">
    <property type="entry name" value="RuvA_2-like"/>
</dbReference>
<dbReference type="InterPro" id="IPR001943">
    <property type="entry name" value="UVR_dom"/>
</dbReference>
<dbReference type="InterPro" id="IPR036876">
    <property type="entry name" value="UVR_dom_sf"/>
</dbReference>
<dbReference type="InterPro" id="IPR050066">
    <property type="entry name" value="UvrABC_protein_C"/>
</dbReference>
<dbReference type="InterPro" id="IPR004791">
    <property type="entry name" value="UvrC"/>
</dbReference>
<dbReference type="InterPro" id="IPR001162">
    <property type="entry name" value="UvrC_RNase_H_dom"/>
</dbReference>
<dbReference type="InterPro" id="IPR038476">
    <property type="entry name" value="UvrC_RNase_H_dom_sf"/>
</dbReference>
<dbReference type="NCBIfam" id="NF001824">
    <property type="entry name" value="PRK00558.1-5"/>
    <property type="match status" value="1"/>
</dbReference>
<dbReference type="NCBIfam" id="TIGR00194">
    <property type="entry name" value="uvrC"/>
    <property type="match status" value="1"/>
</dbReference>
<dbReference type="PANTHER" id="PTHR30562:SF1">
    <property type="entry name" value="UVRABC SYSTEM PROTEIN C"/>
    <property type="match status" value="1"/>
</dbReference>
<dbReference type="PANTHER" id="PTHR30562">
    <property type="entry name" value="UVRC/OXIDOREDUCTASE"/>
    <property type="match status" value="1"/>
</dbReference>
<dbReference type="Pfam" id="PF01541">
    <property type="entry name" value="GIY-YIG"/>
    <property type="match status" value="1"/>
</dbReference>
<dbReference type="Pfam" id="PF14520">
    <property type="entry name" value="HHH_5"/>
    <property type="match status" value="1"/>
</dbReference>
<dbReference type="Pfam" id="PF02151">
    <property type="entry name" value="UVR"/>
    <property type="match status" value="1"/>
</dbReference>
<dbReference type="Pfam" id="PF22920">
    <property type="entry name" value="UvrC_RNaseH"/>
    <property type="match status" value="1"/>
</dbReference>
<dbReference type="Pfam" id="PF08459">
    <property type="entry name" value="UvrC_RNaseH_dom"/>
    <property type="match status" value="1"/>
</dbReference>
<dbReference type="SMART" id="SM00465">
    <property type="entry name" value="GIYc"/>
    <property type="match status" value="1"/>
</dbReference>
<dbReference type="SMART" id="SM00278">
    <property type="entry name" value="HhH1"/>
    <property type="match status" value="2"/>
</dbReference>
<dbReference type="SUPFAM" id="SSF46600">
    <property type="entry name" value="C-terminal UvrC-binding domain of UvrB"/>
    <property type="match status" value="1"/>
</dbReference>
<dbReference type="SUPFAM" id="SSF82771">
    <property type="entry name" value="GIY-YIG endonuclease"/>
    <property type="match status" value="1"/>
</dbReference>
<dbReference type="SUPFAM" id="SSF47781">
    <property type="entry name" value="RuvA domain 2-like"/>
    <property type="match status" value="1"/>
</dbReference>
<dbReference type="PROSITE" id="PS50164">
    <property type="entry name" value="GIY_YIG"/>
    <property type="match status" value="1"/>
</dbReference>
<dbReference type="PROSITE" id="PS50151">
    <property type="entry name" value="UVR"/>
    <property type="match status" value="1"/>
</dbReference>
<dbReference type="PROSITE" id="PS50165">
    <property type="entry name" value="UVRC"/>
    <property type="match status" value="1"/>
</dbReference>
<name>UVRC_SHEPC</name>
<reference key="1">
    <citation type="submission" date="2007-04" db="EMBL/GenBank/DDBJ databases">
        <title>Complete sequence of Shewanella putrefaciens CN-32.</title>
        <authorList>
            <consortium name="US DOE Joint Genome Institute"/>
            <person name="Copeland A."/>
            <person name="Lucas S."/>
            <person name="Lapidus A."/>
            <person name="Barry K."/>
            <person name="Detter J.C."/>
            <person name="Glavina del Rio T."/>
            <person name="Hammon N."/>
            <person name="Israni S."/>
            <person name="Dalin E."/>
            <person name="Tice H."/>
            <person name="Pitluck S."/>
            <person name="Chain P."/>
            <person name="Malfatti S."/>
            <person name="Shin M."/>
            <person name="Vergez L."/>
            <person name="Schmutz J."/>
            <person name="Larimer F."/>
            <person name="Land M."/>
            <person name="Hauser L."/>
            <person name="Kyrpides N."/>
            <person name="Mikhailova N."/>
            <person name="Romine M.F."/>
            <person name="Fredrickson J."/>
            <person name="Tiedje J."/>
            <person name="Richardson P."/>
        </authorList>
    </citation>
    <scope>NUCLEOTIDE SEQUENCE [LARGE SCALE GENOMIC DNA]</scope>
    <source>
        <strain>CN-32 / ATCC BAA-453</strain>
    </source>
</reference>
<protein>
    <recommendedName>
        <fullName evidence="1">UvrABC system protein C</fullName>
        <shortName evidence="1">Protein UvrC</shortName>
    </recommendedName>
    <alternativeName>
        <fullName evidence="1">Excinuclease ABC subunit C</fullName>
    </alternativeName>
</protein>
<gene>
    <name evidence="1" type="primary">uvrC</name>
    <name type="ordered locus">Sputcn32_1640</name>
</gene>
<accession>A4Y5Y2</accession>
<proteinExistence type="inferred from homology"/>
<organism>
    <name type="scientific">Shewanella putrefaciens (strain CN-32 / ATCC BAA-453)</name>
    <dbReference type="NCBI Taxonomy" id="319224"/>
    <lineage>
        <taxon>Bacteria</taxon>
        <taxon>Pseudomonadati</taxon>
        <taxon>Pseudomonadota</taxon>
        <taxon>Gammaproteobacteria</taxon>
        <taxon>Alteromonadales</taxon>
        <taxon>Shewanellaceae</taxon>
        <taxon>Shewanella</taxon>
    </lineage>
</organism>
<evidence type="ECO:0000255" key="1">
    <source>
        <dbReference type="HAMAP-Rule" id="MF_00203"/>
    </source>
</evidence>
<comment type="function">
    <text evidence="1">The UvrABC repair system catalyzes the recognition and processing of DNA lesions. UvrC both incises the 5' and 3' sides of the lesion. The N-terminal half is responsible for the 3' incision and the C-terminal half is responsible for the 5' incision.</text>
</comment>
<comment type="subunit">
    <text evidence="1">Interacts with UvrB in an incision complex.</text>
</comment>
<comment type="subcellular location">
    <subcellularLocation>
        <location evidence="1">Cytoplasm</location>
    </subcellularLocation>
</comment>
<comment type="similarity">
    <text evidence="1">Belongs to the UvrC family.</text>
</comment>
<keyword id="KW-0963">Cytoplasm</keyword>
<keyword id="KW-0227">DNA damage</keyword>
<keyword id="KW-0228">DNA excision</keyword>
<keyword id="KW-0234">DNA repair</keyword>
<keyword id="KW-0267">Excision nuclease</keyword>
<keyword id="KW-0742">SOS response</keyword>
<sequence length="609" mass="68825">MSSVFNAQSFLRTVSSSAGVYRMYDVKGDVIYVGKAKDLKKRLSSYFRKNLDNVKTQALVSHIHHIDVTLTHSETDALLLENDYIKQYMPKYNVLLRDDKSYPYILLSQHEHPRLAYHRGPQREKGHYFGPYPNGGAVRESLHLMQKLFPIRQCDDLYYKSRSRPCLQYQLSRCSAPCVGKVSNADYDEQVKLASLFLKGKDQQVISTLVAKMEQAAQQQEYEQAARFRDQIMALRKVAEQQEVSNNKGDMDVIGVHYASGIACFHLLFIREGKIFGSRSYYPSVPAQTDMDEVLRSFILQFYLNADIQRTIPKEVVISHNFEELHELEAAVSIALNKKFSIKTNVRADRASFLRLAVTNATNAVITRLSHKNTVEQRFVLLEEILELSTPIHRMECFDISHTMGESSVASCVVFNREGPHKGEYRRYNIEGITPGDDYAAMKQAITRRFDKIEAGGKIPDILFIDGGLGQLRIAQKIVDEKFVHLDKAPQLIGVAKGEGRKPGLETLILGDTETSFSLEGDSPALHLIQHIRDESHRFAITGHRNRRQKTRNTSTLESIPGIGPKRRKALLQHLGGLQEVKGASVAELVKVPGISIEMAQTIHDALRG</sequence>
<feature type="chain" id="PRO_1000077840" description="UvrABC system protein C">
    <location>
        <begin position="1"/>
        <end position="609"/>
    </location>
</feature>
<feature type="domain" description="GIY-YIG" evidence="1">
    <location>
        <begin position="16"/>
        <end position="94"/>
    </location>
</feature>
<feature type="domain" description="UVR" evidence="1">
    <location>
        <begin position="203"/>
        <end position="238"/>
    </location>
</feature>